<organism>
    <name type="scientific">Escherichia coli O7:K1 (strain IAI39 / ExPEC)</name>
    <dbReference type="NCBI Taxonomy" id="585057"/>
    <lineage>
        <taxon>Bacteria</taxon>
        <taxon>Pseudomonadati</taxon>
        <taxon>Pseudomonadota</taxon>
        <taxon>Gammaproteobacteria</taxon>
        <taxon>Enterobacterales</taxon>
        <taxon>Enterobacteriaceae</taxon>
        <taxon>Escherichia</taxon>
    </lineage>
</organism>
<reference key="1">
    <citation type="journal article" date="2009" name="PLoS Genet.">
        <title>Organised genome dynamics in the Escherichia coli species results in highly diverse adaptive paths.</title>
        <authorList>
            <person name="Touchon M."/>
            <person name="Hoede C."/>
            <person name="Tenaillon O."/>
            <person name="Barbe V."/>
            <person name="Baeriswyl S."/>
            <person name="Bidet P."/>
            <person name="Bingen E."/>
            <person name="Bonacorsi S."/>
            <person name="Bouchier C."/>
            <person name="Bouvet O."/>
            <person name="Calteau A."/>
            <person name="Chiapello H."/>
            <person name="Clermont O."/>
            <person name="Cruveiller S."/>
            <person name="Danchin A."/>
            <person name="Diard M."/>
            <person name="Dossat C."/>
            <person name="Karoui M.E."/>
            <person name="Frapy E."/>
            <person name="Garry L."/>
            <person name="Ghigo J.M."/>
            <person name="Gilles A.M."/>
            <person name="Johnson J."/>
            <person name="Le Bouguenec C."/>
            <person name="Lescat M."/>
            <person name="Mangenot S."/>
            <person name="Martinez-Jehanne V."/>
            <person name="Matic I."/>
            <person name="Nassif X."/>
            <person name="Oztas S."/>
            <person name="Petit M.A."/>
            <person name="Pichon C."/>
            <person name="Rouy Z."/>
            <person name="Ruf C.S."/>
            <person name="Schneider D."/>
            <person name="Tourret J."/>
            <person name="Vacherie B."/>
            <person name="Vallenet D."/>
            <person name="Medigue C."/>
            <person name="Rocha E.P.C."/>
            <person name="Denamur E."/>
        </authorList>
    </citation>
    <scope>NUCLEOTIDE SEQUENCE [LARGE SCALE GENOMIC DNA]</scope>
    <source>
        <strain>IAI39 / ExPEC</strain>
    </source>
</reference>
<gene>
    <name evidence="1" type="primary">tusA</name>
    <name type="ordered locus">ECIAI39_3951</name>
</gene>
<comment type="function">
    <text evidence="1">Sulfur carrier protein involved in sulfur trafficking in the cell. Part of a sulfur-relay system required for 2-thiolation during synthesis of 2-thiouridine of the modified wobble base 5-methylaminomethyl-2-thiouridine (mnm(5)s(2)U) in tRNA. Interacts with IscS and stimulates its cysteine desulfurase activity. Accepts an activated sulfur from IscS, which is then transferred to TusD, and thus determines the direction of sulfur flow from IscS to 2-thiouridine formation. Also appears to be involved in sulfur transfer for the biosynthesis of molybdopterin.</text>
</comment>
<comment type="pathway">
    <text evidence="1">tRNA modification.</text>
</comment>
<comment type="subunit">
    <text evidence="1">Interacts with IscS.</text>
</comment>
<comment type="subcellular location">
    <subcellularLocation>
        <location evidence="1">Cytoplasm</location>
    </subcellularLocation>
</comment>
<comment type="similarity">
    <text evidence="1">Belongs to the sulfur carrier protein TusA family.</text>
</comment>
<feature type="chain" id="PRO_1000199919" description="Sulfur carrier protein TusA">
    <location>
        <begin position="1"/>
        <end position="81"/>
    </location>
</feature>
<feature type="active site" description="Cysteine persulfide intermediate" evidence="1">
    <location>
        <position position="19"/>
    </location>
</feature>
<evidence type="ECO:0000255" key="1">
    <source>
        <dbReference type="HAMAP-Rule" id="MF_00413"/>
    </source>
</evidence>
<accession>B7NN84</accession>
<dbReference type="EMBL" id="CU928164">
    <property type="protein sequence ID" value="CAR20063.1"/>
    <property type="molecule type" value="Genomic_DNA"/>
</dbReference>
<dbReference type="RefSeq" id="WP_000130621.1">
    <property type="nucleotide sequence ID" value="NC_011750.1"/>
</dbReference>
<dbReference type="RefSeq" id="YP_002409844.1">
    <property type="nucleotide sequence ID" value="NC_011750.1"/>
</dbReference>
<dbReference type="SMR" id="B7NN84"/>
<dbReference type="STRING" id="585057.ECIAI39_3951"/>
<dbReference type="GeneID" id="93778521"/>
<dbReference type="KEGG" id="ect:ECIAI39_3951"/>
<dbReference type="PATRIC" id="fig|585057.6.peg.4093"/>
<dbReference type="HOGENOM" id="CLU_165255_5_0_6"/>
<dbReference type="Proteomes" id="UP000000749">
    <property type="component" value="Chromosome"/>
</dbReference>
<dbReference type="GO" id="GO:0005737">
    <property type="term" value="C:cytoplasm"/>
    <property type="evidence" value="ECO:0007669"/>
    <property type="project" value="UniProtKB-SubCell"/>
</dbReference>
<dbReference type="GO" id="GO:0097163">
    <property type="term" value="F:sulfur carrier activity"/>
    <property type="evidence" value="ECO:0007669"/>
    <property type="project" value="UniProtKB-UniRule"/>
</dbReference>
<dbReference type="GO" id="GO:0002143">
    <property type="term" value="P:tRNA wobble position uridine thiolation"/>
    <property type="evidence" value="ECO:0007669"/>
    <property type="project" value="InterPro"/>
</dbReference>
<dbReference type="CDD" id="cd03423">
    <property type="entry name" value="SirA"/>
    <property type="match status" value="1"/>
</dbReference>
<dbReference type="FunFam" id="3.30.110.40:FF:000002">
    <property type="entry name" value="Sulfur carrier protein TusA"/>
    <property type="match status" value="1"/>
</dbReference>
<dbReference type="Gene3D" id="3.30.110.40">
    <property type="entry name" value="TusA-like domain"/>
    <property type="match status" value="1"/>
</dbReference>
<dbReference type="HAMAP" id="MF_00413">
    <property type="entry name" value="Thiourid_synth_A"/>
    <property type="match status" value="1"/>
</dbReference>
<dbReference type="InterPro" id="IPR022931">
    <property type="entry name" value="Sulphur_carrier_TusA"/>
</dbReference>
<dbReference type="InterPro" id="IPR001455">
    <property type="entry name" value="TusA-like"/>
</dbReference>
<dbReference type="InterPro" id="IPR036868">
    <property type="entry name" value="TusA-like_sf"/>
</dbReference>
<dbReference type="NCBIfam" id="NF001423">
    <property type="entry name" value="PRK00299.1"/>
    <property type="match status" value="1"/>
</dbReference>
<dbReference type="PANTHER" id="PTHR33279:SF2">
    <property type="entry name" value="SULFUR CARRIER PROTEIN TUSA"/>
    <property type="match status" value="1"/>
</dbReference>
<dbReference type="PANTHER" id="PTHR33279">
    <property type="entry name" value="SULFUR CARRIER PROTEIN YEDF-RELATED"/>
    <property type="match status" value="1"/>
</dbReference>
<dbReference type="Pfam" id="PF01206">
    <property type="entry name" value="TusA"/>
    <property type="match status" value="1"/>
</dbReference>
<dbReference type="SUPFAM" id="SSF64307">
    <property type="entry name" value="SirA-like"/>
    <property type="match status" value="1"/>
</dbReference>
<dbReference type="PROSITE" id="PS01148">
    <property type="entry name" value="UPF0033"/>
    <property type="match status" value="1"/>
</dbReference>
<name>TUSA_ECO7I</name>
<keyword id="KW-0963">Cytoplasm</keyword>
<keyword id="KW-0819">tRNA processing</keyword>
<proteinExistence type="inferred from homology"/>
<protein>
    <recommendedName>
        <fullName evidence="1">Sulfur carrier protein TusA</fullName>
    </recommendedName>
    <alternativeName>
        <fullName evidence="1">Sulfur mediator TusA</fullName>
    </alternativeName>
    <alternativeName>
        <fullName evidence="1">Sulfur transfer protein TusA</fullName>
    </alternativeName>
    <alternativeName>
        <fullName evidence="1">tRNA 2-thiouridine synthesizing protein A</fullName>
    </alternativeName>
</protein>
<sequence>MTDLFSSPDHTLDALGLRCPEPVMMVRKTVRNMQPGETLLIIADDPATTRDIPGFCTFMEHELVAKETDGLPYRYLIRKGG</sequence>